<comment type="catalytic activity">
    <reaction evidence="2">
        <text>S-adenosyl-L-methionine + a thiopurine = S-adenosyl-L-homocysteine + a thiopurine S-methylether.</text>
        <dbReference type="EC" id="2.1.1.67"/>
    </reaction>
</comment>
<comment type="subunit">
    <text evidence="2">Monomer.</text>
</comment>
<comment type="subcellular location">
    <subcellularLocation>
        <location evidence="1">Cytoplasm</location>
    </subcellularLocation>
</comment>
<comment type="similarity">
    <text evidence="4">Belongs to the class I-like SAM-binding methyltransferase superfamily. TPMT family.</text>
</comment>
<sequence length="245" mass="28428">MDKTRTFLDVKEYPDTEVQKNRVLTLEEWQEKWVSRRIGFHQEQGHKLLKKHLDTFLKGENGLRVFFPLCGKAVEMKWFADRGHSVVGVEISELGIREFFAEQNLSYTEEPIVEIPGGKIFKSSSGNISLYCCSLFDLPRANIGKFDRIWDRGALVAINPGDRERYADIMLSLTRKGFHYLLAVLCYDPTKHAGPPFYVPEAEIKKLFGSICNIHCLEKVDVFEEQHKSWGIDYIIEKLYLFTEK</sequence>
<evidence type="ECO:0000250" key="1"/>
<evidence type="ECO:0000250" key="2">
    <source>
        <dbReference type="UniProtKB" id="P51580"/>
    </source>
</evidence>
<evidence type="ECO:0000269" key="3">
    <source>
    </source>
</evidence>
<evidence type="ECO:0000305" key="4"/>
<reference key="1">
    <citation type="journal article" date="2002" name="Pharmacogenetics">
        <title>Canine red blood cell thiopurine S-methyltransferase: companion animal pharmacogenetics.</title>
        <authorList>
            <person name="Salavaggione O.E."/>
            <person name="Kidd L."/>
            <person name="Prondzinski J.L."/>
            <person name="Szumlanski C.L."/>
            <person name="Pankratz V.S."/>
            <person name="Wang L."/>
            <person name="Trepanier L."/>
            <person name="Weinshilboum R.M."/>
        </authorList>
    </citation>
    <scope>NUCLEOTIDE SEQUENCE [GENOMIC DNA / MRNA]</scope>
    <scope>VARIANT GLY-97</scope>
</reference>
<keyword id="KW-0007">Acetylation</keyword>
<keyword id="KW-0963">Cytoplasm</keyword>
<keyword id="KW-0489">Methyltransferase</keyword>
<keyword id="KW-1185">Reference proteome</keyword>
<keyword id="KW-0949">S-adenosyl-L-methionine</keyword>
<keyword id="KW-0808">Transferase</keyword>
<dbReference type="EC" id="2.1.1.67"/>
<dbReference type="EMBL" id="AY057077">
    <property type="protein sequence ID" value="AAL18009.1"/>
    <property type="molecule type" value="mRNA"/>
</dbReference>
<dbReference type="EMBL" id="AY057087">
    <property type="protein sequence ID" value="AAL18006.1"/>
    <property type="molecule type" value="Genomic_DNA"/>
</dbReference>
<dbReference type="EMBL" id="AY057080">
    <property type="protein sequence ID" value="AAL18006.1"/>
    <property type="status" value="JOINED"/>
    <property type="molecule type" value="Genomic_DNA"/>
</dbReference>
<dbReference type="EMBL" id="AY057081">
    <property type="protein sequence ID" value="AAL18006.1"/>
    <property type="status" value="JOINED"/>
    <property type="molecule type" value="Genomic_DNA"/>
</dbReference>
<dbReference type="EMBL" id="AY057082">
    <property type="protein sequence ID" value="AAL18006.1"/>
    <property type="status" value="JOINED"/>
    <property type="molecule type" value="Genomic_DNA"/>
</dbReference>
<dbReference type="EMBL" id="AY057083">
    <property type="protein sequence ID" value="AAL18006.1"/>
    <property type="status" value="JOINED"/>
    <property type="molecule type" value="Genomic_DNA"/>
</dbReference>
<dbReference type="EMBL" id="AY057084">
    <property type="protein sequence ID" value="AAL18006.1"/>
    <property type="status" value="JOINED"/>
    <property type="molecule type" value="Genomic_DNA"/>
</dbReference>
<dbReference type="EMBL" id="AY057085">
    <property type="protein sequence ID" value="AAL18006.1"/>
    <property type="status" value="JOINED"/>
    <property type="molecule type" value="Genomic_DNA"/>
</dbReference>
<dbReference type="EMBL" id="AY057086">
    <property type="protein sequence ID" value="AAL18006.1"/>
    <property type="status" value="JOINED"/>
    <property type="molecule type" value="Genomic_DNA"/>
</dbReference>
<dbReference type="RefSeq" id="NP_001003015.1">
    <property type="nucleotide sequence ID" value="NM_001003015.2"/>
</dbReference>
<dbReference type="RefSeq" id="XP_005640012.1">
    <property type="nucleotide sequence ID" value="XM_005639955.2"/>
</dbReference>
<dbReference type="RefSeq" id="XP_005640013.1">
    <property type="nucleotide sequence ID" value="XM_005639956.2"/>
</dbReference>
<dbReference type="RefSeq" id="XP_013965954.1">
    <property type="nucleotide sequence ID" value="XM_014110479.1"/>
</dbReference>
<dbReference type="RefSeq" id="XP_038302067.1">
    <property type="nucleotide sequence ID" value="XM_038446139.1"/>
</dbReference>
<dbReference type="RefSeq" id="XP_038302068.1">
    <property type="nucleotide sequence ID" value="XM_038446140.1"/>
</dbReference>
<dbReference type="RefSeq" id="XP_038302069.1">
    <property type="nucleotide sequence ID" value="XM_038446141.1"/>
</dbReference>
<dbReference type="SMR" id="Q8HX86"/>
<dbReference type="FunCoup" id="Q8HX86">
    <property type="interactions" value="63"/>
</dbReference>
<dbReference type="STRING" id="9615.ENSCAFP00000014924"/>
<dbReference type="PaxDb" id="9612-ENSCAFP00000014924"/>
<dbReference type="Ensembl" id="ENSCAFT00000016138.3">
    <property type="protein sequence ID" value="ENSCAFP00000014924.1"/>
    <property type="gene ID" value="ENSCAFG00000010160.6"/>
</dbReference>
<dbReference type="Ensembl" id="ENSCAFT00030024981.1">
    <property type="protein sequence ID" value="ENSCAFP00030021817.1"/>
    <property type="gene ID" value="ENSCAFG00030013471.1"/>
</dbReference>
<dbReference type="Ensembl" id="ENSCAFT00845050687.1">
    <property type="protein sequence ID" value="ENSCAFP00845039735.1"/>
    <property type="gene ID" value="ENSCAFG00845028681.1"/>
</dbReference>
<dbReference type="GeneID" id="403536"/>
<dbReference type="KEGG" id="cfa:403536"/>
<dbReference type="CTD" id="7172"/>
<dbReference type="VEuPathDB" id="HostDB:ENSCAFG00845028681"/>
<dbReference type="VGNC" id="VGNC:47745">
    <property type="gene designation" value="TPMT"/>
</dbReference>
<dbReference type="eggNOG" id="ENOG502QSF5">
    <property type="taxonomic scope" value="Eukaryota"/>
</dbReference>
<dbReference type="GeneTree" id="ENSGT00390000016823"/>
<dbReference type="HOGENOM" id="CLU_085515_2_0_1"/>
<dbReference type="InParanoid" id="Q8HX86"/>
<dbReference type="OMA" id="LWCGDFF"/>
<dbReference type="OrthoDB" id="276151at2759"/>
<dbReference type="TreeFam" id="TF328951"/>
<dbReference type="Reactome" id="R-CFA-156581">
    <property type="pathway name" value="Methylation"/>
</dbReference>
<dbReference type="Reactome" id="R-CFA-9748787">
    <property type="pathway name" value="Azathioprine ADME"/>
</dbReference>
<dbReference type="Proteomes" id="UP000002254">
    <property type="component" value="Chromosome 35"/>
</dbReference>
<dbReference type="Proteomes" id="UP000694429">
    <property type="component" value="Chromosome 35"/>
</dbReference>
<dbReference type="Proteomes" id="UP000694542">
    <property type="component" value="Unplaced"/>
</dbReference>
<dbReference type="Proteomes" id="UP000805418">
    <property type="component" value="Chromosome 35"/>
</dbReference>
<dbReference type="Bgee" id="ENSCAFG00000010160">
    <property type="expression patterns" value="Expressed in metanephros cortex and 49 other cell types or tissues"/>
</dbReference>
<dbReference type="GO" id="GO:0005737">
    <property type="term" value="C:cytoplasm"/>
    <property type="evidence" value="ECO:0007669"/>
    <property type="project" value="UniProtKB-SubCell"/>
</dbReference>
<dbReference type="GO" id="GO:1904047">
    <property type="term" value="F:S-adenosyl-L-methionine binding"/>
    <property type="evidence" value="ECO:0007669"/>
    <property type="project" value="Ensembl"/>
</dbReference>
<dbReference type="GO" id="GO:0008119">
    <property type="term" value="F:thiopurine S-methyltransferase activity"/>
    <property type="evidence" value="ECO:0000318"/>
    <property type="project" value="GO_Central"/>
</dbReference>
<dbReference type="GO" id="GO:0032259">
    <property type="term" value="P:methylation"/>
    <property type="evidence" value="ECO:0007669"/>
    <property type="project" value="UniProtKB-KW"/>
</dbReference>
<dbReference type="GO" id="GO:0006805">
    <property type="term" value="P:xenobiotic metabolic process"/>
    <property type="evidence" value="ECO:0007669"/>
    <property type="project" value="Ensembl"/>
</dbReference>
<dbReference type="FunFam" id="3.40.50.150:FF:000101">
    <property type="entry name" value="Thiopurine S-methyltransferase"/>
    <property type="match status" value="1"/>
</dbReference>
<dbReference type="Gene3D" id="3.40.50.150">
    <property type="entry name" value="Vaccinia Virus protein VP39"/>
    <property type="match status" value="1"/>
</dbReference>
<dbReference type="HAMAP" id="MF_00812">
    <property type="entry name" value="Thiopur_methtran"/>
    <property type="match status" value="1"/>
</dbReference>
<dbReference type="InterPro" id="IPR029063">
    <property type="entry name" value="SAM-dependent_MTases_sf"/>
</dbReference>
<dbReference type="InterPro" id="IPR025835">
    <property type="entry name" value="Thiopurine_S-MeTrfase"/>
</dbReference>
<dbReference type="InterPro" id="IPR008854">
    <property type="entry name" value="TPMT"/>
</dbReference>
<dbReference type="PANTHER" id="PTHR10259">
    <property type="entry name" value="THIOPURINE S-METHYLTRANSFERASE"/>
    <property type="match status" value="1"/>
</dbReference>
<dbReference type="PANTHER" id="PTHR10259:SF11">
    <property type="entry name" value="THIOPURINE S-METHYLTRANSFERASE"/>
    <property type="match status" value="1"/>
</dbReference>
<dbReference type="Pfam" id="PF05724">
    <property type="entry name" value="TPMT"/>
    <property type="match status" value="1"/>
</dbReference>
<dbReference type="PIRSF" id="PIRSF023956">
    <property type="entry name" value="Thiopurine_S-methyltransferase"/>
    <property type="match status" value="1"/>
</dbReference>
<dbReference type="SUPFAM" id="SSF53335">
    <property type="entry name" value="S-adenosyl-L-methionine-dependent methyltransferases"/>
    <property type="match status" value="1"/>
</dbReference>
<dbReference type="PROSITE" id="PS51585">
    <property type="entry name" value="SAM_MT_TPMT"/>
    <property type="match status" value="1"/>
</dbReference>
<name>TPMT_CANLF</name>
<organism>
    <name type="scientific">Canis lupus familiaris</name>
    <name type="common">Dog</name>
    <name type="synonym">Canis familiaris</name>
    <dbReference type="NCBI Taxonomy" id="9615"/>
    <lineage>
        <taxon>Eukaryota</taxon>
        <taxon>Metazoa</taxon>
        <taxon>Chordata</taxon>
        <taxon>Craniata</taxon>
        <taxon>Vertebrata</taxon>
        <taxon>Euteleostomi</taxon>
        <taxon>Mammalia</taxon>
        <taxon>Eutheria</taxon>
        <taxon>Laurasiatheria</taxon>
        <taxon>Carnivora</taxon>
        <taxon>Caniformia</taxon>
        <taxon>Canidae</taxon>
        <taxon>Canis</taxon>
    </lineage>
</organism>
<protein>
    <recommendedName>
        <fullName>Thiopurine S-methyltransferase</fullName>
        <ecNumber>2.1.1.67</ecNumber>
    </recommendedName>
    <alternativeName>
        <fullName>Thiopurine methyltransferase</fullName>
    </alternativeName>
</protein>
<gene>
    <name type="primary">TPMT</name>
</gene>
<accession>Q8HX86</accession>
<feature type="chain" id="PRO_0000220097" description="Thiopurine S-methyltransferase">
    <location>
        <begin position="1"/>
        <end position="245"/>
    </location>
</feature>
<feature type="binding site" evidence="1">
    <location>
        <begin position="29"/>
        <end position="40"/>
    </location>
    <ligand>
        <name>S-adenosyl-L-methionine</name>
        <dbReference type="ChEBI" id="CHEBI:59789"/>
    </ligand>
</feature>
<feature type="binding site" evidence="1">
    <location>
        <position position="40"/>
    </location>
    <ligand>
        <name>substrate</name>
    </ligand>
</feature>
<feature type="binding site" evidence="1">
    <location>
        <position position="69"/>
    </location>
    <ligand>
        <name>S-adenosyl-L-methionine</name>
        <dbReference type="ChEBI" id="CHEBI:59789"/>
    </ligand>
</feature>
<feature type="binding site" evidence="1">
    <location>
        <position position="90"/>
    </location>
    <ligand>
        <name>S-adenosyl-L-methionine</name>
        <dbReference type="ChEBI" id="CHEBI:59789"/>
    </ligand>
</feature>
<feature type="binding site" evidence="1">
    <location>
        <position position="152"/>
    </location>
    <ligand>
        <name>S-adenosyl-L-methionine</name>
        <dbReference type="ChEBI" id="CHEBI:59789"/>
    </ligand>
</feature>
<feature type="modified residue" description="N6-acetyllysine" evidence="2">
    <location>
        <position position="58"/>
    </location>
</feature>
<feature type="sequence variant" evidence="3">
    <original>R</original>
    <variation>G</variation>
    <location>
        <position position="97"/>
    </location>
</feature>
<proteinExistence type="evidence at transcript level"/>